<comment type="cofactor">
    <cofactor evidence="1">
        <name>Zn(2+)</name>
        <dbReference type="ChEBI" id="CHEBI:29105"/>
    </cofactor>
    <text evidence="1">Binds 1 zinc ion per subunit.</text>
</comment>
<comment type="subcellular location">
    <subcellularLocation>
        <location evidence="1">Cell inner membrane</location>
        <topology evidence="1">Multi-pass membrane protein</topology>
    </subcellularLocation>
</comment>
<comment type="similarity">
    <text evidence="1">Belongs to the peptidase M48B family.</text>
</comment>
<dbReference type="EC" id="3.4.24.-" evidence="1"/>
<dbReference type="EMBL" id="CP001616">
    <property type="protein sequence ID" value="ACQ92727.1"/>
    <property type="molecule type" value="Genomic_DNA"/>
</dbReference>
<dbReference type="RefSeq" id="WP_012729326.1">
    <property type="nucleotide sequence ID" value="NC_012691.1"/>
</dbReference>
<dbReference type="SMR" id="C4LDD1"/>
<dbReference type="STRING" id="595494.Tola_1101"/>
<dbReference type="MEROPS" id="M48.002"/>
<dbReference type="KEGG" id="tau:Tola_1101"/>
<dbReference type="eggNOG" id="COG0501">
    <property type="taxonomic scope" value="Bacteria"/>
</dbReference>
<dbReference type="HOGENOM" id="CLU_042266_1_0_6"/>
<dbReference type="OrthoDB" id="15218at2"/>
<dbReference type="Proteomes" id="UP000009073">
    <property type="component" value="Chromosome"/>
</dbReference>
<dbReference type="GO" id="GO:0005886">
    <property type="term" value="C:plasma membrane"/>
    <property type="evidence" value="ECO:0007669"/>
    <property type="project" value="UniProtKB-SubCell"/>
</dbReference>
<dbReference type="GO" id="GO:0004222">
    <property type="term" value="F:metalloendopeptidase activity"/>
    <property type="evidence" value="ECO:0007669"/>
    <property type="project" value="UniProtKB-UniRule"/>
</dbReference>
<dbReference type="GO" id="GO:0008270">
    <property type="term" value="F:zinc ion binding"/>
    <property type="evidence" value="ECO:0007669"/>
    <property type="project" value="UniProtKB-UniRule"/>
</dbReference>
<dbReference type="GO" id="GO:0006508">
    <property type="term" value="P:proteolysis"/>
    <property type="evidence" value="ECO:0007669"/>
    <property type="project" value="UniProtKB-KW"/>
</dbReference>
<dbReference type="CDD" id="cd07335">
    <property type="entry name" value="M48B_HtpX_like"/>
    <property type="match status" value="1"/>
</dbReference>
<dbReference type="FunFam" id="3.30.2010.10:FF:000001">
    <property type="entry name" value="Protease HtpX"/>
    <property type="match status" value="1"/>
</dbReference>
<dbReference type="Gene3D" id="3.30.2010.10">
    <property type="entry name" value="Metalloproteases ('zincins'), catalytic domain"/>
    <property type="match status" value="1"/>
</dbReference>
<dbReference type="HAMAP" id="MF_00188">
    <property type="entry name" value="Pept_M48_protease_HtpX"/>
    <property type="match status" value="1"/>
</dbReference>
<dbReference type="InterPro" id="IPR050083">
    <property type="entry name" value="HtpX_protease"/>
</dbReference>
<dbReference type="InterPro" id="IPR022919">
    <property type="entry name" value="Pept_M48_protease_HtpX"/>
</dbReference>
<dbReference type="InterPro" id="IPR001915">
    <property type="entry name" value="Peptidase_M48"/>
</dbReference>
<dbReference type="NCBIfam" id="NF003965">
    <property type="entry name" value="PRK05457.1"/>
    <property type="match status" value="1"/>
</dbReference>
<dbReference type="PANTHER" id="PTHR43221">
    <property type="entry name" value="PROTEASE HTPX"/>
    <property type="match status" value="1"/>
</dbReference>
<dbReference type="PANTHER" id="PTHR43221:SF1">
    <property type="entry name" value="PROTEASE HTPX"/>
    <property type="match status" value="1"/>
</dbReference>
<dbReference type="Pfam" id="PF01435">
    <property type="entry name" value="Peptidase_M48"/>
    <property type="match status" value="1"/>
</dbReference>
<sequence>MKRVLLFLATNLAVMLVLSIVLSVLSSFFGISTRGSGGLLLMAAVFGFGGSIISLLMSKWMAKRSYGVQVIEQPRSEIEYWLFNTVQRQAQQTGIGMPEVGIYDSPDMNAFATGANRNKALVAVSSGLLYNMSRDEAEAVLAHEISHVANGDMVTLTLIQGVVNTFVIYISRVLAGIVSNFMRSDDEESSATGGIAYFAISMVFELIFGILASTIVMWFSRQREFRADAGSAKLVGKDKMIAALERLARGHDSQLDGSMMAFGINGKTAMTELFMSHPPLEKRIQALREMR</sequence>
<accession>C4LDD1</accession>
<feature type="chain" id="PRO_1000203982" description="Protease HtpX">
    <location>
        <begin position="1"/>
        <end position="291"/>
    </location>
</feature>
<feature type="transmembrane region" description="Helical" evidence="1">
    <location>
        <begin position="4"/>
        <end position="24"/>
    </location>
</feature>
<feature type="transmembrane region" description="Helical" evidence="1">
    <location>
        <begin position="37"/>
        <end position="57"/>
    </location>
</feature>
<feature type="transmembrane region" description="Helical" evidence="1">
    <location>
        <begin position="158"/>
        <end position="178"/>
    </location>
</feature>
<feature type="transmembrane region" description="Helical" evidence="1">
    <location>
        <begin position="198"/>
        <end position="218"/>
    </location>
</feature>
<feature type="active site" evidence="1">
    <location>
        <position position="144"/>
    </location>
</feature>
<feature type="binding site" evidence="1">
    <location>
        <position position="143"/>
    </location>
    <ligand>
        <name>Zn(2+)</name>
        <dbReference type="ChEBI" id="CHEBI:29105"/>
        <note>catalytic</note>
    </ligand>
</feature>
<feature type="binding site" evidence="1">
    <location>
        <position position="147"/>
    </location>
    <ligand>
        <name>Zn(2+)</name>
        <dbReference type="ChEBI" id="CHEBI:29105"/>
        <note>catalytic</note>
    </ligand>
</feature>
<feature type="binding site" evidence="1">
    <location>
        <position position="224"/>
    </location>
    <ligand>
        <name>Zn(2+)</name>
        <dbReference type="ChEBI" id="CHEBI:29105"/>
        <note>catalytic</note>
    </ligand>
</feature>
<gene>
    <name evidence="1" type="primary">htpX</name>
    <name type="ordered locus">Tola_1101</name>
</gene>
<protein>
    <recommendedName>
        <fullName evidence="1">Protease HtpX</fullName>
        <ecNumber evidence="1">3.4.24.-</ecNumber>
    </recommendedName>
    <alternativeName>
        <fullName evidence="1">Heat shock protein HtpX</fullName>
    </alternativeName>
</protein>
<proteinExistence type="inferred from homology"/>
<evidence type="ECO:0000255" key="1">
    <source>
        <dbReference type="HAMAP-Rule" id="MF_00188"/>
    </source>
</evidence>
<organism>
    <name type="scientific">Tolumonas auensis (strain DSM 9187 / NBRC 110442 / TA 4)</name>
    <dbReference type="NCBI Taxonomy" id="595494"/>
    <lineage>
        <taxon>Bacteria</taxon>
        <taxon>Pseudomonadati</taxon>
        <taxon>Pseudomonadota</taxon>
        <taxon>Gammaproteobacteria</taxon>
        <taxon>Aeromonadales</taxon>
        <taxon>Aeromonadaceae</taxon>
        <taxon>Tolumonas</taxon>
    </lineage>
</organism>
<name>HTPX_TOLAT</name>
<reference key="1">
    <citation type="submission" date="2009-05" db="EMBL/GenBank/DDBJ databases">
        <title>Complete sequence of Tolumonas auensis DSM 9187.</title>
        <authorList>
            <consortium name="US DOE Joint Genome Institute"/>
            <person name="Lucas S."/>
            <person name="Copeland A."/>
            <person name="Lapidus A."/>
            <person name="Glavina del Rio T."/>
            <person name="Tice H."/>
            <person name="Bruce D."/>
            <person name="Goodwin L."/>
            <person name="Pitluck S."/>
            <person name="Chertkov O."/>
            <person name="Brettin T."/>
            <person name="Detter J.C."/>
            <person name="Han C."/>
            <person name="Larimer F."/>
            <person name="Land M."/>
            <person name="Hauser L."/>
            <person name="Kyrpides N."/>
            <person name="Mikhailova N."/>
            <person name="Spring S."/>
            <person name="Beller H."/>
        </authorList>
    </citation>
    <scope>NUCLEOTIDE SEQUENCE [LARGE SCALE GENOMIC DNA]</scope>
    <source>
        <strain>DSM 9187 / NBRC 110442 / TA 4</strain>
    </source>
</reference>
<keyword id="KW-0997">Cell inner membrane</keyword>
<keyword id="KW-1003">Cell membrane</keyword>
<keyword id="KW-0378">Hydrolase</keyword>
<keyword id="KW-0472">Membrane</keyword>
<keyword id="KW-0479">Metal-binding</keyword>
<keyword id="KW-0482">Metalloprotease</keyword>
<keyword id="KW-0645">Protease</keyword>
<keyword id="KW-1185">Reference proteome</keyword>
<keyword id="KW-0812">Transmembrane</keyword>
<keyword id="KW-1133">Transmembrane helix</keyword>
<keyword id="KW-0862">Zinc</keyword>